<accession>Q8ZYS2</accession>
<evidence type="ECO:0000250" key="1">
    <source>
        <dbReference type="UniProtKB" id="Q5SKC5"/>
    </source>
</evidence>
<evidence type="ECO:0000269" key="2">
    <source>
    </source>
</evidence>
<evidence type="ECO:0000269" key="3">
    <source>
    </source>
</evidence>
<evidence type="ECO:0000303" key="4">
    <source>
    </source>
</evidence>
<evidence type="ECO:0000305" key="5"/>
<evidence type="ECO:0000305" key="6">
    <source>
    </source>
</evidence>
<evidence type="ECO:0000312" key="7">
    <source>
        <dbReference type="EMBL" id="AAL62921.1"/>
    </source>
</evidence>
<name>UDGA_PYRAE</name>
<reference key="1">
    <citation type="journal article" date="2002" name="Proc. Natl. Acad. Sci. U.S.A.">
        <title>Genome sequence of the hyperthermophilic crenarchaeon Pyrobaculum aerophilum.</title>
        <authorList>
            <person name="Fitz-Gibbon S.T."/>
            <person name="Ladner H."/>
            <person name="Kim U.-J."/>
            <person name="Stetter K.O."/>
            <person name="Simon M.I."/>
            <person name="Miller J.H."/>
        </authorList>
    </citation>
    <scope>NUCLEOTIDE SEQUENCE [LARGE SCALE GENOMIC DNA]</scope>
    <source>
        <strain>ATCC 51768 / DSM 7523 / JCM 9630 / CIP 104966 / NBRC 100827 / IM2</strain>
    </source>
</reference>
<reference key="2">
    <citation type="journal article" date="2001" name="J. Biol. Chem.">
        <title>Biochemical characterization of uracil processing activities in the hyperthermophilic archaeon Pyrobaculum aerophilum.</title>
        <authorList>
            <person name="Sartori A.A."/>
            <person name="Schaer P."/>
            <person name="Fitz-Gibbon S."/>
            <person name="Miller J.H."/>
            <person name="Jiricny J."/>
        </authorList>
    </citation>
    <scope>FUNCTION</scope>
    <scope>CATALYTIC ACTIVITY</scope>
    <scope>BIOPHYSICOCHEMICAL PROPERTIES</scope>
</reference>
<reference key="3">
    <citation type="journal article" date="2002" name="J. Biol. Chem.">
        <title>An iron-sulfur cluster in the family 4 uracil-DNA glycosylases.</title>
        <authorList>
            <person name="Hinks J.A."/>
            <person name="Evans M.C."/>
            <person name="De Miguel Y."/>
            <person name="Sartori A.A."/>
            <person name="Jiricny J."/>
            <person name="Pearl L.H."/>
        </authorList>
    </citation>
    <scope>IRON-SULFUR CLUSTER</scope>
</reference>
<dbReference type="EC" id="3.2.2.27" evidence="2"/>
<dbReference type="EMBL" id="AE009441">
    <property type="protein sequence ID" value="AAL62921.1"/>
    <property type="molecule type" value="Genomic_DNA"/>
</dbReference>
<dbReference type="RefSeq" id="WP_011007393.1">
    <property type="nucleotide sequence ID" value="NC_003364.1"/>
</dbReference>
<dbReference type="SMR" id="Q8ZYS2"/>
<dbReference type="STRING" id="178306.PAE0651"/>
<dbReference type="EnsemblBacteria" id="AAL62921">
    <property type="protein sequence ID" value="AAL62921"/>
    <property type="gene ID" value="PAE0651"/>
</dbReference>
<dbReference type="GeneID" id="1465146"/>
<dbReference type="KEGG" id="pai:PAE0651"/>
<dbReference type="PATRIC" id="fig|178306.9.peg.467"/>
<dbReference type="eggNOG" id="arCOG00905">
    <property type="taxonomic scope" value="Archaea"/>
</dbReference>
<dbReference type="HOGENOM" id="CLU_044815_1_3_2"/>
<dbReference type="InParanoid" id="Q8ZYS2"/>
<dbReference type="BRENDA" id="3.2.2.27">
    <property type="organism ID" value="5239"/>
</dbReference>
<dbReference type="Proteomes" id="UP000002439">
    <property type="component" value="Chromosome"/>
</dbReference>
<dbReference type="GO" id="GO:0051539">
    <property type="term" value="F:4 iron, 4 sulfur cluster binding"/>
    <property type="evidence" value="ECO:0000314"/>
    <property type="project" value="UniProtKB"/>
</dbReference>
<dbReference type="GO" id="GO:0046872">
    <property type="term" value="F:metal ion binding"/>
    <property type="evidence" value="ECO:0007669"/>
    <property type="project" value="UniProtKB-KW"/>
</dbReference>
<dbReference type="GO" id="GO:0004844">
    <property type="term" value="F:uracil DNA N-glycosylase activity"/>
    <property type="evidence" value="ECO:0000314"/>
    <property type="project" value="UniProtKB"/>
</dbReference>
<dbReference type="GO" id="GO:0006281">
    <property type="term" value="P:DNA repair"/>
    <property type="evidence" value="ECO:0000314"/>
    <property type="project" value="UniProtKB"/>
</dbReference>
<dbReference type="CDD" id="cd10030">
    <property type="entry name" value="UDG-F4_TTUDGA_SPO1dp_like"/>
    <property type="match status" value="1"/>
</dbReference>
<dbReference type="FunFam" id="3.40.470.10:FF:000013">
    <property type="entry name" value="Type-4 uracil-DNA glycosylase"/>
    <property type="match status" value="1"/>
</dbReference>
<dbReference type="Gene3D" id="3.40.470.10">
    <property type="entry name" value="Uracil-DNA glycosylase-like domain"/>
    <property type="match status" value="1"/>
</dbReference>
<dbReference type="InterPro" id="IPR053423">
    <property type="entry name" value="Type-4_UDG"/>
</dbReference>
<dbReference type="InterPro" id="IPR051536">
    <property type="entry name" value="UDG_Type-4/5"/>
</dbReference>
<dbReference type="InterPro" id="IPR005273">
    <property type="entry name" value="Ura-DNA_glyco_family4"/>
</dbReference>
<dbReference type="InterPro" id="IPR005122">
    <property type="entry name" value="Uracil-DNA_glycosylase-like"/>
</dbReference>
<dbReference type="InterPro" id="IPR036895">
    <property type="entry name" value="Uracil-DNA_glycosylase-like_sf"/>
</dbReference>
<dbReference type="NCBIfam" id="NF040953">
    <property type="entry name" value="Arch_udg"/>
    <property type="match status" value="1"/>
</dbReference>
<dbReference type="NCBIfam" id="TIGR00758">
    <property type="entry name" value="UDG_fam4"/>
    <property type="match status" value="1"/>
</dbReference>
<dbReference type="PANTHER" id="PTHR33693:SF1">
    <property type="entry name" value="TYPE-4 URACIL-DNA GLYCOSYLASE"/>
    <property type="match status" value="1"/>
</dbReference>
<dbReference type="PANTHER" id="PTHR33693">
    <property type="entry name" value="TYPE-5 URACIL-DNA GLYCOSYLASE"/>
    <property type="match status" value="1"/>
</dbReference>
<dbReference type="Pfam" id="PF03167">
    <property type="entry name" value="UDG"/>
    <property type="match status" value="1"/>
</dbReference>
<dbReference type="SMART" id="SM00986">
    <property type="entry name" value="UDG"/>
    <property type="match status" value="1"/>
</dbReference>
<dbReference type="SMART" id="SM00987">
    <property type="entry name" value="UreE_C"/>
    <property type="match status" value="1"/>
</dbReference>
<dbReference type="SUPFAM" id="SSF52141">
    <property type="entry name" value="Uracil-DNA glycosylase-like"/>
    <property type="match status" value="1"/>
</dbReference>
<gene>
    <name evidence="4" type="primary">paudg</name>
    <name evidence="7" type="ordered locus">PAE0651</name>
</gene>
<feature type="chain" id="PRO_0000439184" description="Type-4 uracil-DNA glycosylase">
    <location>
        <begin position="1"/>
        <end position="196"/>
    </location>
</feature>
<feature type="binding site" evidence="1 6">
    <location>
        <position position="13"/>
    </location>
    <ligand>
        <name>[4Fe-4S] cluster</name>
        <dbReference type="ChEBI" id="CHEBI:49883"/>
    </ligand>
</feature>
<feature type="binding site" evidence="1 6">
    <location>
        <position position="16"/>
    </location>
    <ligand>
        <name>[4Fe-4S] cluster</name>
        <dbReference type="ChEBI" id="CHEBI:49883"/>
    </ligand>
</feature>
<feature type="binding site" evidence="1">
    <location>
        <begin position="40"/>
        <end position="42"/>
    </location>
    <ligand>
        <name>uracil</name>
        <dbReference type="ChEBI" id="CHEBI:17568"/>
    </ligand>
</feature>
<feature type="binding site" evidence="1">
    <location>
        <position position="54"/>
    </location>
    <ligand>
        <name>uracil</name>
        <dbReference type="ChEBI" id="CHEBI:17568"/>
    </ligand>
</feature>
<feature type="binding site" evidence="1">
    <location>
        <position position="80"/>
    </location>
    <ligand>
        <name>uracil</name>
        <dbReference type="ChEBI" id="CHEBI:17568"/>
    </ligand>
</feature>
<feature type="binding site" evidence="1 6">
    <location>
        <position position="84"/>
    </location>
    <ligand>
        <name>[4Fe-4S] cluster</name>
        <dbReference type="ChEBI" id="CHEBI:49883"/>
    </ligand>
</feature>
<feature type="binding site" evidence="1 6">
    <location>
        <position position="100"/>
    </location>
    <ligand>
        <name>[4Fe-4S] cluster</name>
        <dbReference type="ChEBI" id="CHEBI:49883"/>
    </ligand>
</feature>
<feature type="binding site" evidence="1">
    <location>
        <position position="162"/>
    </location>
    <ligand>
        <name>uracil</name>
        <dbReference type="ChEBI" id="CHEBI:17568"/>
    </ligand>
</feature>
<comment type="function">
    <text evidence="2">Removes uracil bases that are present in DNA as a result of either deamination of cytosine or misincorporation of dUMP instead of dTMP. Can remove uracil from double-stranded DNA containing either a U/G or U/A base pair as well as from single-stranded DNA.</text>
</comment>
<comment type="catalytic activity">
    <reaction evidence="2">
        <text>Hydrolyzes single-stranded DNA or mismatched double-stranded DNA and polynucleotides, releasing free uracil.</text>
        <dbReference type="EC" id="3.2.2.27"/>
    </reaction>
</comment>
<comment type="biophysicochemical properties">
    <temperatureDependence>
        <text evidence="2">Highly thermostable.</text>
    </temperatureDependence>
</comment>
<comment type="miscellaneous">
    <text evidence="3">The 4Fe-4S cluster may have a structural rather than a catalytic role.</text>
</comment>
<comment type="similarity">
    <text evidence="5">Belongs to the uracil-DNA glycosylase (UDG) superfamily. Type 4 (UDGa) family.</text>
</comment>
<keyword id="KW-0004">4Fe-4S</keyword>
<keyword id="KW-0227">DNA damage</keyword>
<keyword id="KW-0234">DNA repair</keyword>
<keyword id="KW-0378">Hydrolase</keyword>
<keyword id="KW-0408">Iron</keyword>
<keyword id="KW-0411">Iron-sulfur</keyword>
<keyword id="KW-0479">Metal-binding</keyword>
<keyword id="KW-1185">Reference proteome</keyword>
<sequence length="196" mass="21563">MDLQKLHELIKNCDKCPLHKYRKNAVPGEGEMKLGVMIVGEAPGASEDEAGRPFVGAAGQLLTEALSRLGVRRGDVFITNVVKCRPPNNRTPNREEVEACLPYLIQQIGILKPRRIIALGLISAKALMELMGRRAEKLGDVKGKCYQGRIAGVQVELCITYHPAAVLRKPALRGEFQKDLAMFFGGGLDRFLDPSK</sequence>
<organism>
    <name type="scientific">Pyrobaculum aerophilum (strain ATCC 51768 / DSM 7523 / JCM 9630 / CIP 104966 / NBRC 100827 / IM2)</name>
    <dbReference type="NCBI Taxonomy" id="178306"/>
    <lineage>
        <taxon>Archaea</taxon>
        <taxon>Thermoproteota</taxon>
        <taxon>Thermoprotei</taxon>
        <taxon>Thermoproteales</taxon>
        <taxon>Thermoproteaceae</taxon>
        <taxon>Pyrobaculum</taxon>
    </lineage>
</organism>
<protein>
    <recommendedName>
        <fullName evidence="5">Type-4 uracil-DNA glycosylase</fullName>
        <ecNumber evidence="2">3.2.2.27</ecNumber>
    </recommendedName>
    <alternativeName>
        <fullName evidence="4">Pa-UDG</fullName>
    </alternativeName>
    <alternativeName>
        <fullName evidence="7">Pa-UDGa</fullName>
    </alternativeName>
</protein>
<proteinExistence type="evidence at protein level"/>